<keyword id="KW-0966">Cell projection</keyword>
<keyword id="KW-0969">Cilium</keyword>
<keyword id="KW-0970">Cilium biogenesis/degradation</keyword>
<keyword id="KW-0175">Coiled coil</keyword>
<keyword id="KW-0963">Cytoplasm</keyword>
<keyword id="KW-0206">Cytoskeleton</keyword>
<keyword id="KW-0282">Flagellum</keyword>
<keyword id="KW-1185">Reference proteome</keyword>
<comment type="function">
    <text evidence="4 5">Has an essential role in the assembly and organization of the sperm flagellar axoneme (PubMed:32791035). Required for the elongation of the primary cilium and sperm flagellar midpiece via modulation of the Notch signaling pathway (PubMed:31904090).</text>
</comment>
<comment type="subunit">
    <text evidence="4">Interacts with ODFP2.</text>
</comment>
<comment type="subcellular location">
    <subcellularLocation>
        <location evidence="1">Cell projection</location>
        <location evidence="1">Cilium</location>
    </subcellularLocation>
    <subcellularLocation>
        <location evidence="4 5">Cell projection</location>
        <location evidence="4 5">Cilium</location>
        <location evidence="4 5">Flagellum</location>
    </subcellularLocation>
    <subcellularLocation>
        <location evidence="4">Cytoplasm</location>
        <location evidence="4">Cytoskeleton</location>
        <location evidence="4">Microtubule organizing center</location>
        <location evidence="4">Centrosome</location>
    </subcellularLocation>
    <text evidence="4 5">Localized to the entire flagellum and predominantly concentrated in the midpiece. Co-localizes with ODFP2 at the centrosome.</text>
</comment>
<comment type="tissue specificity">
    <text evidence="4 5">Predominantly expressed in the testis (PubMed:31904090, PubMed:32791035). Also found at lower levels in ciliated cells and tissues such as neural progenitor cells and oviducts (PubMed:31904090).</text>
</comment>
<comment type="disruption phenotype">
    <text evidence="5">Male mice are infertile with severely decreased sperm motility and abnormal sperm flagellar morphology.</text>
</comment>
<comment type="similarity">
    <text evidence="6">Belongs to the CFAP58 family.</text>
</comment>
<sequence length="873" mass="103524">MTEDKAEKVMPEETAFEEIEKDFQEVLSELSGDKSLEKFRTEYEKLHSIMKKSYENEKRLMAKCRELNAEIVVNSAKVATALKLSQDDQTTIASLKKEIEKAWKMVDSAYDKEQKAKETILALKEEIVNLTKLVEQGSGLSMDQDSNIRDLLKFKEEVTKERDQLLSEVVKLRENLAQTIEKQQAAEHAKEEAEMAISQFQQEIQHRQNEASRESRKKEKLEKELRQIQTDMDGRQAEIKAMQQYMHKSKEELQRLEQQLKEQKILNERAAKEVEQFQMRNAKLQQENDQHTLTCEQLSQENQQKALELKAKEDEIHQMRLDLGKLNKIREQIHKKLHQLDDQKAEVEQQKDTLKNQILGLEREVESSKKQAELDKKAMEELLRERDILNKNMLKAVSATQKQVDLVKLHEQAKKNLEEEIQNYKDEAQKQRKIIFQLEKERDRYINEASDLTQRVLANMEDIKVREIQIFDYRKKIAESETKLKQQQNLYEAVRSDRNLYSKNLVEAQDEITEMKRKLKIMTHQVDQLKEEISAKEAALVKLHLEQQRIEKEKETLKAELQKLRQQALETKHFIEKQEVEERKLLRIIAEADGERVRQKKELDQVISERDILGSQLVRRNDELALLYEKIKIQQSVLNKGETQYNQRVEDMRILKLEIKKLRREKGILARSVANVEELRQELYHMQREFLKERTRCRALEEELENPMNVHRWRKLEASDPSTFELIQKIHTLQKRLISKTEEVVEKELLLQEKEKLYVELKHILARQPGPEAAEQLQIYRHTLREKTKQLKVLSSELNMYESQSQEYKYEIERLGNELMSLKKKYLAQKRKELVLKNKDRMSMNNIFSETKKSVPRFTGGGFPLHQATKVKF</sequence>
<proteinExistence type="evidence at protein level"/>
<protein>
    <recommendedName>
        <fullName evidence="6">Cilia- and flagella-associated protein 58</fullName>
    </recommendedName>
</protein>
<dbReference type="EMBL" id="AC126679">
    <property type="status" value="NOT_ANNOTATED_CDS"/>
    <property type="molecule type" value="Genomic_DNA"/>
</dbReference>
<dbReference type="EMBL" id="AC127264">
    <property type="status" value="NOT_ANNOTATED_CDS"/>
    <property type="molecule type" value="Genomic_DNA"/>
</dbReference>
<dbReference type="EMBL" id="BC147530">
    <property type="protein sequence ID" value="AAI47531.1"/>
    <property type="molecule type" value="mRNA"/>
</dbReference>
<dbReference type="EMBL" id="BC147540">
    <property type="protein sequence ID" value="AAI47541.1"/>
    <property type="molecule type" value="mRNA"/>
</dbReference>
<dbReference type="EMBL" id="BC150978">
    <property type="protein sequence ID" value="AAI50979.1"/>
    <property type="molecule type" value="mRNA"/>
</dbReference>
<dbReference type="EMBL" id="BC150979">
    <property type="protein sequence ID" value="AAI50980.1"/>
    <property type="molecule type" value="mRNA"/>
</dbReference>
<dbReference type="CCDS" id="CCDS50466.1"/>
<dbReference type="RefSeq" id="NP_001156739.1">
    <property type="nucleotide sequence ID" value="NM_001163267.1"/>
</dbReference>
<dbReference type="SMR" id="B2RW38"/>
<dbReference type="FunCoup" id="B2RW38">
    <property type="interactions" value="78"/>
</dbReference>
<dbReference type="STRING" id="10090.ENSMUSP00000070533"/>
<dbReference type="iPTMnet" id="B2RW38"/>
<dbReference type="PhosphoSitePlus" id="B2RW38"/>
<dbReference type="PaxDb" id="10090-ENSMUSP00000070533"/>
<dbReference type="ProteomicsDB" id="281597"/>
<dbReference type="Antibodypedia" id="48984">
    <property type="antibodies" value="101 antibodies from 15 providers"/>
</dbReference>
<dbReference type="Ensembl" id="ENSMUST00000066308.9">
    <property type="protein sequence ID" value="ENSMUSP00000070533.8"/>
    <property type="gene ID" value="ENSMUSG00000046585.10"/>
</dbReference>
<dbReference type="GeneID" id="381229"/>
<dbReference type="KEGG" id="mmu:381229"/>
<dbReference type="UCSC" id="uc008hvw.1">
    <property type="organism name" value="mouse"/>
</dbReference>
<dbReference type="AGR" id="MGI:2685815"/>
<dbReference type="CTD" id="159686"/>
<dbReference type="MGI" id="MGI:2685815">
    <property type="gene designation" value="Cfap58"/>
</dbReference>
<dbReference type="VEuPathDB" id="HostDB:ENSMUSG00000046585"/>
<dbReference type="eggNOG" id="ENOG502QPV7">
    <property type="taxonomic scope" value="Eukaryota"/>
</dbReference>
<dbReference type="GeneTree" id="ENSGT00530000063534"/>
<dbReference type="HOGENOM" id="CLU_006364_0_0_1"/>
<dbReference type="InParanoid" id="B2RW38"/>
<dbReference type="OMA" id="CQDDMRL"/>
<dbReference type="OrthoDB" id="264785at2759"/>
<dbReference type="PhylomeDB" id="B2RW38"/>
<dbReference type="TreeFam" id="TF328680"/>
<dbReference type="BioGRID-ORCS" id="381229">
    <property type="hits" value="1 hit in 76 CRISPR screens"/>
</dbReference>
<dbReference type="PRO" id="PR:B2RW38"/>
<dbReference type="Proteomes" id="UP000000589">
    <property type="component" value="Chromosome 19"/>
</dbReference>
<dbReference type="RNAct" id="B2RW38">
    <property type="molecule type" value="protein"/>
</dbReference>
<dbReference type="Bgee" id="ENSMUSG00000046585">
    <property type="expression patterns" value="Expressed in spermatid and 16 other cell types or tissues"/>
</dbReference>
<dbReference type="ExpressionAtlas" id="B2RW38">
    <property type="expression patterns" value="baseline and differential"/>
</dbReference>
<dbReference type="GO" id="GO:0005813">
    <property type="term" value="C:centrosome"/>
    <property type="evidence" value="ECO:0000314"/>
    <property type="project" value="UniProtKB"/>
</dbReference>
<dbReference type="GO" id="GO:0005737">
    <property type="term" value="C:cytoplasm"/>
    <property type="evidence" value="ECO:0007669"/>
    <property type="project" value="UniProtKB-KW"/>
</dbReference>
<dbReference type="GO" id="GO:0036126">
    <property type="term" value="C:sperm flagellum"/>
    <property type="evidence" value="ECO:0000314"/>
    <property type="project" value="UniProtKB"/>
</dbReference>
<dbReference type="GO" id="GO:0097225">
    <property type="term" value="C:sperm midpiece"/>
    <property type="evidence" value="ECO:0000314"/>
    <property type="project" value="MGI"/>
</dbReference>
<dbReference type="GO" id="GO:0060271">
    <property type="term" value="P:cilium assembly"/>
    <property type="evidence" value="ECO:0000315"/>
    <property type="project" value="UniProtKB"/>
</dbReference>
<dbReference type="GO" id="GO:0030317">
    <property type="term" value="P:flagellated sperm motility"/>
    <property type="evidence" value="ECO:0000315"/>
    <property type="project" value="MGI"/>
</dbReference>
<dbReference type="GO" id="GO:0007219">
    <property type="term" value="P:Notch signaling pathway"/>
    <property type="evidence" value="ECO:0000315"/>
    <property type="project" value="UniProtKB"/>
</dbReference>
<dbReference type="GO" id="GO:0120229">
    <property type="term" value="P:protein localization to motile cilium"/>
    <property type="evidence" value="ECO:0007669"/>
    <property type="project" value="Ensembl"/>
</dbReference>
<dbReference type="GO" id="GO:0007288">
    <property type="term" value="P:sperm axoneme assembly"/>
    <property type="evidence" value="ECO:0000315"/>
    <property type="project" value="MGI"/>
</dbReference>
<dbReference type="GO" id="GO:0120316">
    <property type="term" value="P:sperm flagellum assembly"/>
    <property type="evidence" value="ECO:0000315"/>
    <property type="project" value="UniProtKB"/>
</dbReference>
<dbReference type="GO" id="GO:0120317">
    <property type="term" value="P:sperm mitochondrial sheath assembly"/>
    <property type="evidence" value="ECO:0007669"/>
    <property type="project" value="Ensembl"/>
</dbReference>
<dbReference type="InterPro" id="IPR049270">
    <property type="entry name" value="CFAP58_CC"/>
</dbReference>
<dbReference type="PANTHER" id="PTHR32083">
    <property type="entry name" value="CILIA AND FLAGELLA-ASSOCIATED PROTEIN 58-RELATED"/>
    <property type="match status" value="1"/>
</dbReference>
<dbReference type="PANTHER" id="PTHR32083:SF31">
    <property type="entry name" value="CILIA- AND FLAGELLA-ASSOCIATED PROTEIN 58"/>
    <property type="match status" value="1"/>
</dbReference>
<dbReference type="Pfam" id="PF21771">
    <property type="entry name" value="CFAP58_CC"/>
    <property type="match status" value="1"/>
</dbReference>
<gene>
    <name evidence="8" type="primary">Cfap58</name>
</gene>
<feature type="chain" id="PRO_0000432111" description="Cilia- and flagella-associated protein 58">
    <location>
        <begin position="1"/>
        <end position="873"/>
    </location>
</feature>
<feature type="region of interest" description="Disordered" evidence="3">
    <location>
        <begin position="202"/>
        <end position="221"/>
    </location>
</feature>
<feature type="coiled-coil region" evidence="2">
    <location>
        <begin position="106"/>
        <end position="609"/>
    </location>
</feature>
<feature type="coiled-coil region" evidence="2">
    <location>
        <begin position="642"/>
        <end position="832"/>
    </location>
</feature>
<feature type="compositionally biased region" description="Basic and acidic residues" evidence="3">
    <location>
        <begin position="204"/>
        <end position="221"/>
    </location>
</feature>
<evidence type="ECO:0000250" key="1">
    <source>
        <dbReference type="UniProtKB" id="A8HUA1"/>
    </source>
</evidence>
<evidence type="ECO:0000255" key="2"/>
<evidence type="ECO:0000256" key="3">
    <source>
        <dbReference type="SAM" id="MobiDB-lite"/>
    </source>
</evidence>
<evidence type="ECO:0000269" key="4">
    <source>
    </source>
</evidence>
<evidence type="ECO:0000269" key="5">
    <source>
    </source>
</evidence>
<evidence type="ECO:0000305" key="6"/>
<evidence type="ECO:0000312" key="7">
    <source>
        <dbReference type="EMBL" id="AAI47531.1"/>
    </source>
</evidence>
<evidence type="ECO:0000312" key="8">
    <source>
        <dbReference type="MGI" id="MGI:2685815"/>
    </source>
</evidence>
<name>CFA58_MOUSE</name>
<organism evidence="7">
    <name type="scientific">Mus musculus</name>
    <name type="common">Mouse</name>
    <dbReference type="NCBI Taxonomy" id="10090"/>
    <lineage>
        <taxon>Eukaryota</taxon>
        <taxon>Metazoa</taxon>
        <taxon>Chordata</taxon>
        <taxon>Craniata</taxon>
        <taxon>Vertebrata</taxon>
        <taxon>Euteleostomi</taxon>
        <taxon>Mammalia</taxon>
        <taxon>Eutheria</taxon>
        <taxon>Euarchontoglires</taxon>
        <taxon>Glires</taxon>
        <taxon>Rodentia</taxon>
        <taxon>Myomorpha</taxon>
        <taxon>Muroidea</taxon>
        <taxon>Muridae</taxon>
        <taxon>Murinae</taxon>
        <taxon>Mus</taxon>
        <taxon>Mus</taxon>
    </lineage>
</organism>
<accession>B2RW38</accession>
<reference key="1">
    <citation type="journal article" date="2009" name="PLoS Biol.">
        <title>Lineage-specific biology revealed by a finished genome assembly of the mouse.</title>
        <authorList>
            <person name="Church D.M."/>
            <person name="Goodstadt L."/>
            <person name="Hillier L.W."/>
            <person name="Zody M.C."/>
            <person name="Goldstein S."/>
            <person name="She X."/>
            <person name="Bult C.J."/>
            <person name="Agarwala R."/>
            <person name="Cherry J.L."/>
            <person name="DiCuccio M."/>
            <person name="Hlavina W."/>
            <person name="Kapustin Y."/>
            <person name="Meric P."/>
            <person name="Maglott D."/>
            <person name="Birtle Z."/>
            <person name="Marques A.C."/>
            <person name="Graves T."/>
            <person name="Zhou S."/>
            <person name="Teague B."/>
            <person name="Potamousis K."/>
            <person name="Churas C."/>
            <person name="Place M."/>
            <person name="Herschleb J."/>
            <person name="Runnheim R."/>
            <person name="Forrest D."/>
            <person name="Amos-Landgraf J."/>
            <person name="Schwartz D.C."/>
            <person name="Cheng Z."/>
            <person name="Lindblad-Toh K."/>
            <person name="Eichler E.E."/>
            <person name="Ponting C.P."/>
        </authorList>
    </citation>
    <scope>NUCLEOTIDE SEQUENCE [LARGE SCALE GENOMIC DNA]</scope>
    <source>
        <strain>C57BL/6J</strain>
    </source>
</reference>
<reference key="2">
    <citation type="journal article" date="2004" name="Genome Res.">
        <title>The status, quality, and expansion of the NIH full-length cDNA project: the Mammalian Gene Collection (MGC).</title>
        <authorList>
            <consortium name="The MGC Project Team"/>
        </authorList>
    </citation>
    <scope>NUCLEOTIDE SEQUENCE [LARGE SCALE MRNA]</scope>
    <source>
        <tissue>Brain</tissue>
        <tissue>Testis</tissue>
    </source>
</reference>
<reference key="3">
    <citation type="journal article" date="2020" name="Am. J. Hum. Genet.">
        <title>Bi-allelic loss-of-function variants in CFAP58 cause flagellar axoneme and mitochondrial sheath defects and asthenoteratozoospermia in humans and mice.</title>
        <authorList>
            <person name="He X."/>
            <person name="Liu C."/>
            <person name="Yang X."/>
            <person name="Lv M."/>
            <person name="Ni X."/>
            <person name="Li Q."/>
            <person name="Cheng H."/>
            <person name="Liu W."/>
            <person name="Tian S."/>
            <person name="Wu H."/>
            <person name="Gao Y."/>
            <person name="Yang C."/>
            <person name="Tan Q."/>
            <person name="Cong J."/>
            <person name="Tang D."/>
            <person name="Zhang J."/>
            <person name="Song B."/>
            <person name="Zhong Y."/>
            <person name="Li H."/>
            <person name="Zhi W."/>
            <person name="Mao X."/>
            <person name="Fu F."/>
            <person name="Ge L."/>
            <person name="Shen Q."/>
            <person name="Zhang M."/>
            <person name="Saiyin H."/>
            <person name="Jin L."/>
            <person name="Xu Y."/>
            <person name="Zhou P."/>
            <person name="Wei Z."/>
            <person name="Zhang F."/>
            <person name="Cao Y."/>
        </authorList>
    </citation>
    <scope>FUNCTION</scope>
    <scope>SUBCELLULAR LOCATION</scope>
    <scope>TISSUE SPECIFICITY</scope>
    <scope>DISRUPTION PHENOTYPE</scope>
</reference>
<reference key="4">
    <citation type="journal article" date="2020" name="Biosci. Rep.">
        <title>The novel testicular enrichment protein Cfap58 is required for Notch-associated ciliogenesis.</title>
        <authorList>
            <person name="Li Z.Z."/>
            <person name="Zhao W.L."/>
            <person name="Wang G.S."/>
            <person name="Gu N.H."/>
            <person name="Sun F."/>
        </authorList>
    </citation>
    <scope>FUNCTION</scope>
    <scope>SUBCELLULAR LOCATION</scope>
    <scope>TISSUE SPECIFICITY</scope>
    <scope>INTERACTION WITH ODFP2</scope>
</reference>